<dbReference type="EC" id="3.6.5.n1" evidence="1"/>
<dbReference type="EMBL" id="CP001661">
    <property type="protein sequence ID" value="ACT18375.1"/>
    <property type="molecule type" value="Genomic_DNA"/>
</dbReference>
<dbReference type="SMR" id="C6DZ67"/>
<dbReference type="STRING" id="443144.GM21_2327"/>
<dbReference type="KEGG" id="gem:GM21_2327"/>
<dbReference type="eggNOG" id="COG0481">
    <property type="taxonomic scope" value="Bacteria"/>
</dbReference>
<dbReference type="HOGENOM" id="CLU_009995_3_3_7"/>
<dbReference type="OrthoDB" id="9801591at2"/>
<dbReference type="GO" id="GO:0005886">
    <property type="term" value="C:plasma membrane"/>
    <property type="evidence" value="ECO:0007669"/>
    <property type="project" value="UniProtKB-SubCell"/>
</dbReference>
<dbReference type="GO" id="GO:0005525">
    <property type="term" value="F:GTP binding"/>
    <property type="evidence" value="ECO:0007669"/>
    <property type="project" value="UniProtKB-UniRule"/>
</dbReference>
<dbReference type="GO" id="GO:0003924">
    <property type="term" value="F:GTPase activity"/>
    <property type="evidence" value="ECO:0007669"/>
    <property type="project" value="UniProtKB-UniRule"/>
</dbReference>
<dbReference type="GO" id="GO:0043022">
    <property type="term" value="F:ribosome binding"/>
    <property type="evidence" value="ECO:0007669"/>
    <property type="project" value="UniProtKB-UniRule"/>
</dbReference>
<dbReference type="GO" id="GO:0003746">
    <property type="term" value="F:translation elongation factor activity"/>
    <property type="evidence" value="ECO:0007669"/>
    <property type="project" value="UniProtKB-UniRule"/>
</dbReference>
<dbReference type="GO" id="GO:0045727">
    <property type="term" value="P:positive regulation of translation"/>
    <property type="evidence" value="ECO:0007669"/>
    <property type="project" value="UniProtKB-UniRule"/>
</dbReference>
<dbReference type="CDD" id="cd03699">
    <property type="entry name" value="EF4_II"/>
    <property type="match status" value="1"/>
</dbReference>
<dbReference type="CDD" id="cd16260">
    <property type="entry name" value="EF4_III"/>
    <property type="match status" value="1"/>
</dbReference>
<dbReference type="CDD" id="cd01890">
    <property type="entry name" value="LepA"/>
    <property type="match status" value="1"/>
</dbReference>
<dbReference type="CDD" id="cd03709">
    <property type="entry name" value="lepA_C"/>
    <property type="match status" value="1"/>
</dbReference>
<dbReference type="FunFam" id="3.40.50.300:FF:000078">
    <property type="entry name" value="Elongation factor 4"/>
    <property type="match status" value="1"/>
</dbReference>
<dbReference type="FunFam" id="2.40.30.10:FF:000015">
    <property type="entry name" value="Translation factor GUF1, mitochondrial"/>
    <property type="match status" value="1"/>
</dbReference>
<dbReference type="FunFam" id="3.30.70.240:FF:000007">
    <property type="entry name" value="Translation factor GUF1, mitochondrial"/>
    <property type="match status" value="1"/>
</dbReference>
<dbReference type="FunFam" id="3.30.70.2570:FF:000001">
    <property type="entry name" value="Translation factor GUF1, mitochondrial"/>
    <property type="match status" value="1"/>
</dbReference>
<dbReference type="FunFam" id="3.30.70.870:FF:000004">
    <property type="entry name" value="Translation factor GUF1, mitochondrial"/>
    <property type="match status" value="1"/>
</dbReference>
<dbReference type="Gene3D" id="3.30.70.240">
    <property type="match status" value="1"/>
</dbReference>
<dbReference type="Gene3D" id="3.30.70.2570">
    <property type="entry name" value="Elongation factor 4, C-terminal domain"/>
    <property type="match status" value="1"/>
</dbReference>
<dbReference type="Gene3D" id="3.30.70.870">
    <property type="entry name" value="Elongation Factor G (Translational Gtpase), domain 3"/>
    <property type="match status" value="1"/>
</dbReference>
<dbReference type="Gene3D" id="3.40.50.300">
    <property type="entry name" value="P-loop containing nucleotide triphosphate hydrolases"/>
    <property type="match status" value="1"/>
</dbReference>
<dbReference type="Gene3D" id="2.40.30.10">
    <property type="entry name" value="Translation factors"/>
    <property type="match status" value="1"/>
</dbReference>
<dbReference type="HAMAP" id="MF_00071">
    <property type="entry name" value="LepA"/>
    <property type="match status" value="1"/>
</dbReference>
<dbReference type="InterPro" id="IPR006297">
    <property type="entry name" value="EF-4"/>
</dbReference>
<dbReference type="InterPro" id="IPR035647">
    <property type="entry name" value="EFG_III/V"/>
</dbReference>
<dbReference type="InterPro" id="IPR000640">
    <property type="entry name" value="EFG_V-like"/>
</dbReference>
<dbReference type="InterPro" id="IPR004161">
    <property type="entry name" value="EFTu-like_2"/>
</dbReference>
<dbReference type="InterPro" id="IPR031157">
    <property type="entry name" value="G_TR_CS"/>
</dbReference>
<dbReference type="InterPro" id="IPR038363">
    <property type="entry name" value="LepA_C_sf"/>
</dbReference>
<dbReference type="InterPro" id="IPR013842">
    <property type="entry name" value="LepA_CTD"/>
</dbReference>
<dbReference type="InterPro" id="IPR035654">
    <property type="entry name" value="LepA_IV"/>
</dbReference>
<dbReference type="InterPro" id="IPR027417">
    <property type="entry name" value="P-loop_NTPase"/>
</dbReference>
<dbReference type="InterPro" id="IPR005225">
    <property type="entry name" value="Small_GTP-bd"/>
</dbReference>
<dbReference type="InterPro" id="IPR000795">
    <property type="entry name" value="T_Tr_GTP-bd_dom"/>
</dbReference>
<dbReference type="NCBIfam" id="TIGR01393">
    <property type="entry name" value="lepA"/>
    <property type="match status" value="1"/>
</dbReference>
<dbReference type="NCBIfam" id="TIGR00231">
    <property type="entry name" value="small_GTP"/>
    <property type="match status" value="1"/>
</dbReference>
<dbReference type="PANTHER" id="PTHR43512:SF4">
    <property type="entry name" value="TRANSLATION FACTOR GUF1 HOMOLOG, CHLOROPLASTIC"/>
    <property type="match status" value="1"/>
</dbReference>
<dbReference type="PANTHER" id="PTHR43512">
    <property type="entry name" value="TRANSLATION FACTOR GUF1-RELATED"/>
    <property type="match status" value="1"/>
</dbReference>
<dbReference type="Pfam" id="PF00679">
    <property type="entry name" value="EFG_C"/>
    <property type="match status" value="1"/>
</dbReference>
<dbReference type="Pfam" id="PF00009">
    <property type="entry name" value="GTP_EFTU"/>
    <property type="match status" value="1"/>
</dbReference>
<dbReference type="Pfam" id="PF03144">
    <property type="entry name" value="GTP_EFTU_D2"/>
    <property type="match status" value="1"/>
</dbReference>
<dbReference type="Pfam" id="PF06421">
    <property type="entry name" value="LepA_C"/>
    <property type="match status" value="1"/>
</dbReference>
<dbReference type="PRINTS" id="PR00315">
    <property type="entry name" value="ELONGATNFCT"/>
</dbReference>
<dbReference type="SUPFAM" id="SSF54980">
    <property type="entry name" value="EF-G C-terminal domain-like"/>
    <property type="match status" value="2"/>
</dbReference>
<dbReference type="SUPFAM" id="SSF52540">
    <property type="entry name" value="P-loop containing nucleoside triphosphate hydrolases"/>
    <property type="match status" value="1"/>
</dbReference>
<dbReference type="PROSITE" id="PS00301">
    <property type="entry name" value="G_TR_1"/>
    <property type="match status" value="1"/>
</dbReference>
<dbReference type="PROSITE" id="PS51722">
    <property type="entry name" value="G_TR_2"/>
    <property type="match status" value="1"/>
</dbReference>
<accession>C6DZ67</accession>
<evidence type="ECO:0000255" key="1">
    <source>
        <dbReference type="HAMAP-Rule" id="MF_00071"/>
    </source>
</evidence>
<keyword id="KW-0997">Cell inner membrane</keyword>
<keyword id="KW-1003">Cell membrane</keyword>
<keyword id="KW-0342">GTP-binding</keyword>
<keyword id="KW-0378">Hydrolase</keyword>
<keyword id="KW-0472">Membrane</keyword>
<keyword id="KW-0547">Nucleotide-binding</keyword>
<keyword id="KW-0648">Protein biosynthesis</keyword>
<reference key="1">
    <citation type="submission" date="2009-07" db="EMBL/GenBank/DDBJ databases">
        <title>Complete sequence of Geobacter sp. M21.</title>
        <authorList>
            <consortium name="US DOE Joint Genome Institute"/>
            <person name="Lucas S."/>
            <person name="Copeland A."/>
            <person name="Lapidus A."/>
            <person name="Glavina del Rio T."/>
            <person name="Dalin E."/>
            <person name="Tice H."/>
            <person name="Bruce D."/>
            <person name="Goodwin L."/>
            <person name="Pitluck S."/>
            <person name="Saunders E."/>
            <person name="Brettin T."/>
            <person name="Detter J.C."/>
            <person name="Han C."/>
            <person name="Larimer F."/>
            <person name="Land M."/>
            <person name="Hauser L."/>
            <person name="Kyrpides N."/>
            <person name="Ovchinnikova G."/>
            <person name="Lovley D."/>
        </authorList>
    </citation>
    <scope>NUCLEOTIDE SEQUENCE [LARGE SCALE GENOMIC DNA]</scope>
    <source>
        <strain>M21</strain>
    </source>
</reference>
<sequence length="599" mass="66982">MVIEHIRNFSIIAHIDHGKSTLADRLLEFTGTVSSREKQDQFLDKMDLERERGITIKAQTVRLNYRADDGKDYVLNLIDTPGHVDFTYEVSRSLTACEGGLLVVDASQGVEAQTLANVYLALDANLEVFVVLNKIDLPAAEPERVKAEIEEIIGLDTHDAVLASAKEGIGTKDILEEIVKKIPPPQGDPAKPLKALLFDSWYDQYQGVIILVRIVDGVVKKGDKIQLMSNKKTHEVLKAGVFSPEMRETQQLCAGEVGFIIAGIREVADAKVGDTVTLLHNPCDAALAGYKEVKPMVFSGLYPIDTSQYEQLRDALAKLKLNDSSFSYDPETSLALGFGFRCGFLGLLHMEIIQERLEREFNLELITTAPTVVYRVHGTDGSLTTIQSANQLPPTQEIAYVEEPFILASIHVPNDFVGGILALCEEKRGVQREIKYLTPTRVMVVYELPLNEVVLDFYDRLKSITKGYASLDYELLDYRQSELVRLNIMINGEVVDALSLIIHKDKAYYRGRELVSKMKELIPRQMFEIAIQAAVGTKVIARETVKAMRKDVLAKCYGGDITRKRKLLEKQKEGKKRMKNVGNVELPQEAFLAILKVEG</sequence>
<feature type="chain" id="PRO_1000202452" description="Elongation factor 4">
    <location>
        <begin position="1"/>
        <end position="599"/>
    </location>
</feature>
<feature type="domain" description="tr-type G">
    <location>
        <begin position="4"/>
        <end position="186"/>
    </location>
</feature>
<feature type="binding site" evidence="1">
    <location>
        <begin position="16"/>
        <end position="21"/>
    </location>
    <ligand>
        <name>GTP</name>
        <dbReference type="ChEBI" id="CHEBI:37565"/>
    </ligand>
</feature>
<feature type="binding site" evidence="1">
    <location>
        <begin position="133"/>
        <end position="136"/>
    </location>
    <ligand>
        <name>GTP</name>
        <dbReference type="ChEBI" id="CHEBI:37565"/>
    </ligand>
</feature>
<comment type="function">
    <text evidence="1">Required for accurate and efficient protein synthesis under certain stress conditions. May act as a fidelity factor of the translation reaction, by catalyzing a one-codon backward translocation of tRNAs on improperly translocated ribosomes. Back-translocation proceeds from a post-translocation (POST) complex to a pre-translocation (PRE) complex, thus giving elongation factor G a second chance to translocate the tRNAs correctly. Binds to ribosomes in a GTP-dependent manner.</text>
</comment>
<comment type="catalytic activity">
    <reaction evidence="1">
        <text>GTP + H2O = GDP + phosphate + H(+)</text>
        <dbReference type="Rhea" id="RHEA:19669"/>
        <dbReference type="ChEBI" id="CHEBI:15377"/>
        <dbReference type="ChEBI" id="CHEBI:15378"/>
        <dbReference type="ChEBI" id="CHEBI:37565"/>
        <dbReference type="ChEBI" id="CHEBI:43474"/>
        <dbReference type="ChEBI" id="CHEBI:58189"/>
        <dbReference type="EC" id="3.6.5.n1"/>
    </reaction>
</comment>
<comment type="subcellular location">
    <subcellularLocation>
        <location evidence="1">Cell inner membrane</location>
        <topology evidence="1">Peripheral membrane protein</topology>
        <orientation evidence="1">Cytoplasmic side</orientation>
    </subcellularLocation>
</comment>
<comment type="similarity">
    <text evidence="1">Belongs to the TRAFAC class translation factor GTPase superfamily. Classic translation factor GTPase family. LepA subfamily.</text>
</comment>
<gene>
    <name evidence="1" type="primary">lepA</name>
    <name type="ordered locus">GM21_2327</name>
</gene>
<organism>
    <name type="scientific">Geobacter sp. (strain M21)</name>
    <dbReference type="NCBI Taxonomy" id="443144"/>
    <lineage>
        <taxon>Bacteria</taxon>
        <taxon>Pseudomonadati</taxon>
        <taxon>Thermodesulfobacteriota</taxon>
        <taxon>Desulfuromonadia</taxon>
        <taxon>Geobacterales</taxon>
        <taxon>Geobacteraceae</taxon>
        <taxon>Geobacter</taxon>
    </lineage>
</organism>
<protein>
    <recommendedName>
        <fullName evidence="1">Elongation factor 4</fullName>
        <shortName evidence="1">EF-4</shortName>
        <ecNumber evidence="1">3.6.5.n1</ecNumber>
    </recommendedName>
    <alternativeName>
        <fullName evidence="1">Ribosomal back-translocase LepA</fullName>
    </alternativeName>
</protein>
<proteinExistence type="inferred from homology"/>
<name>LEPA_GEOSM</name>